<organismHost>
    <name type="scientific">Felidae</name>
    <name type="common">cat family</name>
    <dbReference type="NCBI Taxonomy" id="9681"/>
</organismHost>
<comment type="function">
    <text evidence="1">Plays a role in viral particle release. Presumably acts by facilitating the fission of the virion bud at the cell surface.</text>
</comment>
<comment type="subcellular location">
    <subcellularLocation>
        <location evidence="1 2">Host cell membrane</location>
        <topology evidence="1">Single-pass membrane protein</topology>
    </subcellularLocation>
</comment>
<comment type="alternative products">
    <event type="alternative initiation"/>
    <isoform>
        <id>P0DOH1-1</id>
        <name>Glyco-Gag protein</name>
        <sequence type="displayed"/>
    </isoform>
    <isoform>
        <id>P03337-1</id>
        <name>Gag polyprotein</name>
        <sequence type="external"/>
    </isoform>
</comment>
<comment type="PTM">
    <text evidence="1">Glycosylated by host.</text>
</comment>
<comment type="PTM">
    <text evidence="1">Cleaved by host near the middle of the molecule, releasing the c-terminal half containing capsid and nucleoprotein domains op GAG.</text>
</comment>
<name>GGAG_FSVGA</name>
<feature type="chain" id="PRO_0000441135" description="Glyco-Gag protein">
    <location>
        <begin position="1"/>
        <end position="425"/>
    </location>
</feature>
<feature type="topological domain" description="Cytoplasmic" evidence="5">
    <location>
        <begin position="1"/>
        <end position="54"/>
    </location>
</feature>
<feature type="transmembrane region" description="Helical" evidence="2">
    <location>
        <begin position="55"/>
        <end position="75"/>
    </location>
</feature>
<feature type="topological domain" description="Extracellular" evidence="5">
    <location>
        <begin position="76"/>
        <end position="425"/>
    </location>
</feature>
<feature type="region of interest" description="Disordered" evidence="4">
    <location>
        <begin position="174"/>
        <end position="285"/>
    </location>
</feature>
<feature type="compositionally biased region" description="Pro residues" evidence="4">
    <location>
        <begin position="177"/>
        <end position="196"/>
    </location>
</feature>
<feature type="compositionally biased region" description="Low complexity" evidence="4">
    <location>
        <begin position="197"/>
        <end position="209"/>
    </location>
</feature>
<feature type="compositionally biased region" description="Pro residues" evidence="4">
    <location>
        <begin position="213"/>
        <end position="223"/>
    </location>
</feature>
<feature type="compositionally biased region" description="Pro residues" evidence="4">
    <location>
        <begin position="233"/>
        <end position="248"/>
    </location>
</feature>
<feature type="glycosylation site" description="N-linked (GlcNAc...) asparagine; by host" evidence="2 3">
    <location>
        <position position="137"/>
    </location>
</feature>
<organism>
    <name type="scientific">Feline sarcoma virus (strain Gardner-Arnstein)</name>
    <name type="common">Ga-FeSV</name>
    <name type="synonym">Gardner-Arnstein feline leukemia oncovirus B</name>
    <dbReference type="NCBI Taxonomy" id="11774"/>
    <lineage>
        <taxon>Viruses</taxon>
        <taxon>Riboviria</taxon>
        <taxon>Pararnavirae</taxon>
        <taxon>Artverviricota</taxon>
        <taxon>Revtraviricetes</taxon>
        <taxon>Ortervirales</taxon>
        <taxon>Retroviridae</taxon>
        <taxon>Orthoretrovirinae</taxon>
        <taxon>Gammaretrovirus</taxon>
    </lineage>
</organism>
<reference key="1">
    <citation type="journal article" date="1983" name="J. Virol.">
        <title>Nucleotide sequences of feline sarcoma virus long terminal repeats and 5' leaders show extensive homology to those of other mammalian retroviruses.</title>
        <authorList>
            <person name="Hampe A."/>
            <person name="Gobet M."/>
            <person name="Even J."/>
            <person name="Sherr C.J."/>
            <person name="Galibert F."/>
        </authorList>
    </citation>
    <scope>NUCLEOTIDE SEQUENCE [GENOMIC RNA] OF 1-78</scope>
</reference>
<reference key="2">
    <citation type="journal article" date="1982" name="Cell">
        <title>Nucleotide sequences of feline retroviral oncogenes (v-fes) provide evidence for a family of tyrosine-specific protein kinase genes.</title>
        <authorList>
            <person name="Hampe A."/>
            <person name="Laprevotte I."/>
            <person name="Galibert F."/>
            <person name="Fedele L.A."/>
            <person name="Sherr C.J."/>
        </authorList>
    </citation>
    <scope>NUCLEOTIDE SEQUENCE [GENOMIC RNA] OF 78-425</scope>
</reference>
<proteinExistence type="inferred from homology"/>
<dbReference type="EMBL" id="J02086">
    <property type="status" value="NOT_ANNOTATED_CDS"/>
    <property type="molecule type" value="Genomic_RNA"/>
</dbReference>
<dbReference type="EMBL" id="J02087">
    <property type="status" value="NOT_ANNOTATED_CDS"/>
    <property type="molecule type" value="Genomic_RNA"/>
</dbReference>
<dbReference type="SMR" id="P0DOH1"/>
<dbReference type="GO" id="GO:0020002">
    <property type="term" value="C:host cell plasma membrane"/>
    <property type="evidence" value="ECO:0007669"/>
    <property type="project" value="UniProtKB-SubCell"/>
</dbReference>
<dbReference type="GO" id="GO:0016020">
    <property type="term" value="C:membrane"/>
    <property type="evidence" value="ECO:0007669"/>
    <property type="project" value="UniProtKB-KW"/>
</dbReference>
<dbReference type="GO" id="GO:0019068">
    <property type="term" value="P:virion assembly"/>
    <property type="evidence" value="ECO:0007669"/>
    <property type="project" value="InterPro"/>
</dbReference>
<dbReference type="Gene3D" id="1.10.150.180">
    <property type="entry name" value="Gamma-retroviral matrix domain"/>
    <property type="match status" value="1"/>
</dbReference>
<dbReference type="Gene3D" id="1.10.375.10">
    <property type="entry name" value="Human Immunodeficiency Virus Type 1 Capsid Protein"/>
    <property type="match status" value="1"/>
</dbReference>
<dbReference type="InterPro" id="IPR000840">
    <property type="entry name" value="G_retro_matrix"/>
</dbReference>
<dbReference type="InterPro" id="IPR036946">
    <property type="entry name" value="G_retro_matrix_sf"/>
</dbReference>
<dbReference type="InterPro" id="IPR002079">
    <property type="entry name" value="Gag_p12"/>
</dbReference>
<dbReference type="InterPro" id="IPR003036">
    <property type="entry name" value="Gag_P30"/>
</dbReference>
<dbReference type="InterPro" id="IPR008919">
    <property type="entry name" value="Retrov_capsid_N"/>
</dbReference>
<dbReference type="InterPro" id="IPR050462">
    <property type="entry name" value="Retroviral_Gag-Pol_poly"/>
</dbReference>
<dbReference type="InterPro" id="IPR010999">
    <property type="entry name" value="Retrovr_matrix"/>
</dbReference>
<dbReference type="PANTHER" id="PTHR33166">
    <property type="entry name" value="GAG_P30 DOMAIN-CONTAINING PROTEIN"/>
    <property type="match status" value="1"/>
</dbReference>
<dbReference type="Pfam" id="PF01140">
    <property type="entry name" value="Gag_MA"/>
    <property type="match status" value="1"/>
</dbReference>
<dbReference type="Pfam" id="PF01141">
    <property type="entry name" value="Gag_p12"/>
    <property type="match status" value="1"/>
</dbReference>
<dbReference type="Pfam" id="PF02093">
    <property type="entry name" value="Gag_p30"/>
    <property type="match status" value="1"/>
</dbReference>
<dbReference type="SUPFAM" id="SSF47836">
    <property type="entry name" value="Retroviral matrix proteins"/>
    <property type="match status" value="1"/>
</dbReference>
<dbReference type="SUPFAM" id="SSF47943">
    <property type="entry name" value="Retrovirus capsid protein, N-terminal core domain"/>
    <property type="match status" value="1"/>
</dbReference>
<evidence type="ECO:0000250" key="1">
    <source>
        <dbReference type="UniProtKB" id="P0DOG8"/>
    </source>
</evidence>
<evidence type="ECO:0000255" key="2"/>
<evidence type="ECO:0000255" key="3">
    <source>
        <dbReference type="PROSITE-ProRule" id="PRU00498"/>
    </source>
</evidence>
<evidence type="ECO:0000256" key="4">
    <source>
        <dbReference type="SAM" id="MobiDB-lite"/>
    </source>
</evidence>
<evidence type="ECO:0000305" key="5"/>
<sequence>MSRASSGTATGARLFGISSVLGEYRVLIGDEGAGPSRSPSEVSFSVWYRSRAARLVIVCLVASFLVPCLTFLIAETVMGQTITTPLSLTLDHWSEVRARAHNQGVEVRKKKWITLCEAEWVMMNVGWPREGTFSLDNISQVEKKIFAPGPYGHPDQVPYITTWRSLATDPPSWVRPFLPPPKPPTSLPQPLSPQPSAPLTSSLYPVLPKSDPPKPPVLPPDPSSPLIDLLTEEPPPYPGGHGPPPSGPRTPTASPIASRLRERRENPAEESQALPLREGPNNRPQYWPFSASDLYNWKSHNPPFSQDPVALTNLIESILVTHQPTWDDCQQLLQALLTGEERQRVLLEARKQVPGEDGRPTQLPNVIDETFPLTRPNWDFATPAGREHLRLYRQLLLAGLRGAARRPTNLAQVKQVVQGKEETPA</sequence>
<accession>P0DOH1</accession>
<protein>
    <recommendedName>
        <fullName>Glyco-Gag protein</fullName>
    </recommendedName>
    <alternativeName>
        <fullName>Gross cell surface antigen</fullName>
    </alternativeName>
    <alternativeName>
        <fullName>glycosylated Pr80 gag</fullName>
        <shortName>gPr80 Gag</shortName>
        <shortName>gag-gPr80</shortName>
    </alternativeName>
</protein>
<keyword id="KW-0024">Alternative initiation</keyword>
<keyword id="KW-0325">Glycoprotein</keyword>
<keyword id="KW-1032">Host cell membrane</keyword>
<keyword id="KW-1043">Host membrane</keyword>
<keyword id="KW-0472">Membrane</keyword>
<keyword id="KW-0812">Transmembrane</keyword>
<keyword id="KW-1133">Transmembrane helix</keyword>